<reference key="1">
    <citation type="journal article" date="2001" name="Nature">
        <title>Complete genome sequence of Salmonella enterica serovar Typhimurium LT2.</title>
        <authorList>
            <person name="McClelland M."/>
            <person name="Sanderson K.E."/>
            <person name="Spieth J."/>
            <person name="Clifton S.W."/>
            <person name="Latreille P."/>
            <person name="Courtney L."/>
            <person name="Porwollik S."/>
            <person name="Ali J."/>
            <person name="Dante M."/>
            <person name="Du F."/>
            <person name="Hou S."/>
            <person name="Layman D."/>
            <person name="Leonard S."/>
            <person name="Nguyen C."/>
            <person name="Scott K."/>
            <person name="Holmes A."/>
            <person name="Grewal N."/>
            <person name="Mulvaney E."/>
            <person name="Ryan E."/>
            <person name="Sun H."/>
            <person name="Florea L."/>
            <person name="Miller W."/>
            <person name="Stoneking T."/>
            <person name="Nhan M."/>
            <person name="Waterston R."/>
            <person name="Wilson R.K."/>
        </authorList>
    </citation>
    <scope>NUCLEOTIDE SEQUENCE [LARGE SCALE GENOMIC DNA]</scope>
    <source>
        <strain>LT2 / SGSC1412 / ATCC 700720</strain>
    </source>
</reference>
<protein>
    <recommendedName>
        <fullName>UPF0266 membrane protein YobD</fullName>
    </recommendedName>
</protein>
<evidence type="ECO:0000250" key="1"/>
<evidence type="ECO:0000255" key="2"/>
<evidence type="ECO:0000305" key="3"/>
<organism>
    <name type="scientific">Salmonella typhimurium (strain LT2 / SGSC1412 / ATCC 700720)</name>
    <dbReference type="NCBI Taxonomy" id="99287"/>
    <lineage>
        <taxon>Bacteria</taxon>
        <taxon>Pseudomonadati</taxon>
        <taxon>Pseudomonadota</taxon>
        <taxon>Gammaproteobacteria</taxon>
        <taxon>Enterobacterales</taxon>
        <taxon>Enterobacteriaceae</taxon>
        <taxon>Salmonella</taxon>
    </lineage>
</organism>
<comment type="subcellular location">
    <subcellularLocation>
        <location evidence="1">Cell inner membrane</location>
        <topology evidence="1">Multi-pass membrane protein</topology>
    </subcellularLocation>
</comment>
<comment type="similarity">
    <text evidence="3">Belongs to the UPF0266 family.</text>
</comment>
<keyword id="KW-0997">Cell inner membrane</keyword>
<keyword id="KW-1003">Cell membrane</keyword>
<keyword id="KW-0472">Membrane</keyword>
<keyword id="KW-1185">Reference proteome</keyword>
<keyword id="KW-0812">Transmembrane</keyword>
<keyword id="KW-1133">Transmembrane helix</keyword>
<name>YOBD_SALTY</name>
<sequence>MTITDLVLILFIAALLAYALYDQFIMPRRNGPTLLSIALLRRGRVDSVIFVGLVAILIYNNVTSHGAQMTTWLLSALALMGFYIFWIRTPRIIFKQRGFFFANVWIEYNRIKEMNLSEDGVLVMQLEQRRLLIRVRNIDDLEKIYKLLIENQYLKI</sequence>
<gene>
    <name type="primary">yobD</name>
    <name type="ordered locus">STM1833</name>
</gene>
<proteinExistence type="inferred from homology"/>
<accession>Q8ZP01</accession>
<feature type="chain" id="PRO_0000218121" description="UPF0266 membrane protein YobD">
    <location>
        <begin position="1"/>
        <end position="156"/>
    </location>
</feature>
<feature type="topological domain" description="Periplasmic" evidence="2">
    <location>
        <begin position="1"/>
        <end position="5"/>
    </location>
</feature>
<feature type="transmembrane region" description="Helical" evidence="2">
    <location>
        <begin position="6"/>
        <end position="26"/>
    </location>
</feature>
<feature type="topological domain" description="Cytoplasmic" evidence="2">
    <location>
        <begin position="27"/>
        <end position="44"/>
    </location>
</feature>
<feature type="transmembrane region" description="Helical" evidence="2">
    <location>
        <begin position="45"/>
        <end position="65"/>
    </location>
</feature>
<feature type="topological domain" description="Periplasmic" evidence="2">
    <location>
        <position position="66"/>
    </location>
</feature>
<feature type="transmembrane region" description="Helical" evidence="2">
    <location>
        <begin position="67"/>
        <end position="87"/>
    </location>
</feature>
<feature type="topological domain" description="Cytoplasmic" evidence="2">
    <location>
        <begin position="88"/>
        <end position="156"/>
    </location>
</feature>
<dbReference type="EMBL" id="AE006468">
    <property type="protein sequence ID" value="AAL20748.1"/>
    <property type="molecule type" value="Genomic_DNA"/>
</dbReference>
<dbReference type="RefSeq" id="NP_460789.1">
    <property type="nucleotide sequence ID" value="NC_003197.2"/>
</dbReference>
<dbReference type="RefSeq" id="WP_000156281.1">
    <property type="nucleotide sequence ID" value="NC_003197.2"/>
</dbReference>
<dbReference type="STRING" id="99287.STM1833"/>
<dbReference type="PaxDb" id="99287-STM1833"/>
<dbReference type="GeneID" id="1253352"/>
<dbReference type="KEGG" id="stm:STM1833"/>
<dbReference type="PATRIC" id="fig|99287.12.peg.1934"/>
<dbReference type="HOGENOM" id="CLU_133645_0_0_6"/>
<dbReference type="PhylomeDB" id="Q8ZP01"/>
<dbReference type="BioCyc" id="SENT99287:STM1833-MONOMER"/>
<dbReference type="Proteomes" id="UP000001014">
    <property type="component" value="Chromosome"/>
</dbReference>
<dbReference type="GO" id="GO:0005886">
    <property type="term" value="C:plasma membrane"/>
    <property type="evidence" value="ECO:0007669"/>
    <property type="project" value="UniProtKB-SubCell"/>
</dbReference>
<dbReference type="HAMAP" id="MF_01071">
    <property type="entry name" value="UPF0266"/>
    <property type="match status" value="1"/>
</dbReference>
<dbReference type="InterPro" id="IPR009328">
    <property type="entry name" value="DUF986"/>
</dbReference>
<dbReference type="NCBIfam" id="NF002791">
    <property type="entry name" value="PRK02913.1"/>
    <property type="match status" value="1"/>
</dbReference>
<dbReference type="Pfam" id="PF06173">
    <property type="entry name" value="DUF986"/>
    <property type="match status" value="1"/>
</dbReference>
<dbReference type="PIRSF" id="PIRSF020687">
    <property type="entry name" value="UCP020687"/>
    <property type="match status" value="1"/>
</dbReference>